<gene>
    <name evidence="1" type="primary">rhaS</name>
    <name type="ordered locus">ECUMN_4434</name>
</gene>
<comment type="function">
    <text evidence="1">Activates expression of the rhaBAD and rhaT operons.</text>
</comment>
<comment type="subunit">
    <text evidence="1">Binds DNA as a dimer.</text>
</comment>
<comment type="subcellular location">
    <subcellularLocation>
        <location evidence="1">Cytoplasm</location>
    </subcellularLocation>
</comment>
<accession>B7NFK3</accession>
<protein>
    <recommendedName>
        <fullName evidence="1">HTH-type transcriptional activator RhaS</fullName>
    </recommendedName>
    <alternativeName>
        <fullName evidence="1">L-rhamnose operon regulatory protein RhaS</fullName>
    </alternativeName>
</protein>
<feature type="chain" id="PRO_1000200952" description="HTH-type transcriptional activator RhaS">
    <location>
        <begin position="1"/>
        <end position="278"/>
    </location>
</feature>
<feature type="domain" description="HTH araC/xylS-type" evidence="1">
    <location>
        <begin position="174"/>
        <end position="272"/>
    </location>
</feature>
<feature type="DNA-binding region" description="H-T-H motif" evidence="1">
    <location>
        <begin position="191"/>
        <end position="212"/>
    </location>
</feature>
<feature type="DNA-binding region" description="H-T-H motif" evidence="1">
    <location>
        <begin position="239"/>
        <end position="262"/>
    </location>
</feature>
<feature type="site" description="Interaction with sigma-70" evidence="1">
    <location>
        <position position="241"/>
    </location>
</feature>
<feature type="site" description="Interaction with sigma-70" evidence="1">
    <location>
        <position position="250"/>
    </location>
</feature>
<evidence type="ECO:0000255" key="1">
    <source>
        <dbReference type="HAMAP-Rule" id="MF_01534"/>
    </source>
</evidence>
<proteinExistence type="inferred from homology"/>
<organism>
    <name type="scientific">Escherichia coli O17:K52:H18 (strain UMN026 / ExPEC)</name>
    <dbReference type="NCBI Taxonomy" id="585056"/>
    <lineage>
        <taxon>Bacteria</taxon>
        <taxon>Pseudomonadati</taxon>
        <taxon>Pseudomonadota</taxon>
        <taxon>Gammaproteobacteria</taxon>
        <taxon>Enterobacterales</taxon>
        <taxon>Enterobacteriaceae</taxon>
        <taxon>Escherichia</taxon>
    </lineage>
</organism>
<name>RHAS_ECOLU</name>
<reference key="1">
    <citation type="journal article" date="2009" name="PLoS Genet.">
        <title>Organised genome dynamics in the Escherichia coli species results in highly diverse adaptive paths.</title>
        <authorList>
            <person name="Touchon M."/>
            <person name="Hoede C."/>
            <person name="Tenaillon O."/>
            <person name="Barbe V."/>
            <person name="Baeriswyl S."/>
            <person name="Bidet P."/>
            <person name="Bingen E."/>
            <person name="Bonacorsi S."/>
            <person name="Bouchier C."/>
            <person name="Bouvet O."/>
            <person name="Calteau A."/>
            <person name="Chiapello H."/>
            <person name="Clermont O."/>
            <person name="Cruveiller S."/>
            <person name="Danchin A."/>
            <person name="Diard M."/>
            <person name="Dossat C."/>
            <person name="Karoui M.E."/>
            <person name="Frapy E."/>
            <person name="Garry L."/>
            <person name="Ghigo J.M."/>
            <person name="Gilles A.M."/>
            <person name="Johnson J."/>
            <person name="Le Bouguenec C."/>
            <person name="Lescat M."/>
            <person name="Mangenot S."/>
            <person name="Martinez-Jehanne V."/>
            <person name="Matic I."/>
            <person name="Nassif X."/>
            <person name="Oztas S."/>
            <person name="Petit M.A."/>
            <person name="Pichon C."/>
            <person name="Rouy Z."/>
            <person name="Ruf C.S."/>
            <person name="Schneider D."/>
            <person name="Tourret J."/>
            <person name="Vacherie B."/>
            <person name="Vallenet D."/>
            <person name="Medigue C."/>
            <person name="Rocha E.P.C."/>
            <person name="Denamur E."/>
        </authorList>
    </citation>
    <scope>NUCLEOTIDE SEQUENCE [LARGE SCALE GENOMIC DNA]</scope>
    <source>
        <strain>UMN026 / ExPEC</strain>
    </source>
</reference>
<sequence length="278" mass="32402">MTVLHSVDFFPSGNASVAIEPRLPQADFPEHHHDFHEIVIVEHGTGIHVFNGQPYTITGGTVCFVRDHDRHLYEHTDNLCLTNVLYRSPDRFQFLAGLNQLLPQEQDGQYPSHWRVNHSVLQQVRQLVAQMEQQEEENDLPSTASREILFMQLLLLLRKSSLQENLENSASRLNLLLAWLEDHFADEVNWDAVADQFSLSLRTLHRQLKQKTGLTPQRYLNRLRLMKARHLLRHSEASVTDIAYRCGFSDSNHFSTLFRREFNWSPRDIRQGRDGFLQ</sequence>
<keyword id="KW-0010">Activator</keyword>
<keyword id="KW-0963">Cytoplasm</keyword>
<keyword id="KW-0238">DNA-binding</keyword>
<keyword id="KW-0677">Repeat</keyword>
<keyword id="KW-0684">Rhamnose metabolism</keyword>
<keyword id="KW-0804">Transcription</keyword>
<keyword id="KW-0805">Transcription regulation</keyword>
<dbReference type="EMBL" id="CU928163">
    <property type="protein sequence ID" value="CAR15560.1"/>
    <property type="molecule type" value="Genomic_DNA"/>
</dbReference>
<dbReference type="RefSeq" id="WP_000217149.1">
    <property type="nucleotide sequence ID" value="NC_011751.1"/>
</dbReference>
<dbReference type="RefSeq" id="YP_002415049.1">
    <property type="nucleotide sequence ID" value="NC_011751.1"/>
</dbReference>
<dbReference type="SMR" id="B7NFK3"/>
<dbReference type="STRING" id="585056.ECUMN_4434"/>
<dbReference type="KEGG" id="eum:ECUMN_4434"/>
<dbReference type="PATRIC" id="fig|585056.7.peg.4603"/>
<dbReference type="HOGENOM" id="CLU_000445_88_5_6"/>
<dbReference type="Proteomes" id="UP000007097">
    <property type="component" value="Chromosome"/>
</dbReference>
<dbReference type="GO" id="GO:0005737">
    <property type="term" value="C:cytoplasm"/>
    <property type="evidence" value="ECO:0007669"/>
    <property type="project" value="UniProtKB-SubCell"/>
</dbReference>
<dbReference type="GO" id="GO:0003700">
    <property type="term" value="F:DNA-binding transcription factor activity"/>
    <property type="evidence" value="ECO:0007669"/>
    <property type="project" value="UniProtKB-UniRule"/>
</dbReference>
<dbReference type="GO" id="GO:0043565">
    <property type="term" value="F:sequence-specific DNA binding"/>
    <property type="evidence" value="ECO:0007669"/>
    <property type="project" value="InterPro"/>
</dbReference>
<dbReference type="GO" id="GO:0045893">
    <property type="term" value="P:positive regulation of DNA-templated transcription"/>
    <property type="evidence" value="ECO:0007669"/>
    <property type="project" value="UniProtKB-UniRule"/>
</dbReference>
<dbReference type="GO" id="GO:0019299">
    <property type="term" value="P:rhamnose metabolic process"/>
    <property type="evidence" value="ECO:0007669"/>
    <property type="project" value="UniProtKB-UniRule"/>
</dbReference>
<dbReference type="CDD" id="cd06977">
    <property type="entry name" value="cupin_RhaR_RhaS-like_N"/>
    <property type="match status" value="1"/>
</dbReference>
<dbReference type="FunFam" id="1.10.10.60:FF:000181">
    <property type="entry name" value="HTH-type transcriptional activator RhaS"/>
    <property type="match status" value="1"/>
</dbReference>
<dbReference type="FunFam" id="2.60.120.10:FF:000041">
    <property type="entry name" value="HTH-type transcriptional activator RhaS"/>
    <property type="match status" value="1"/>
</dbReference>
<dbReference type="Gene3D" id="1.10.10.60">
    <property type="entry name" value="Homeodomain-like"/>
    <property type="match status" value="1"/>
</dbReference>
<dbReference type="Gene3D" id="2.60.120.10">
    <property type="entry name" value="Jelly Rolls"/>
    <property type="match status" value="1"/>
</dbReference>
<dbReference type="HAMAP" id="MF_01534">
    <property type="entry name" value="HTH_type_RhaS"/>
    <property type="match status" value="1"/>
</dbReference>
<dbReference type="InterPro" id="IPR003313">
    <property type="entry name" value="AraC-bd"/>
</dbReference>
<dbReference type="InterPro" id="IPR050204">
    <property type="entry name" value="AraC_XylS_family_regulators"/>
</dbReference>
<dbReference type="InterPro" id="IPR009057">
    <property type="entry name" value="Homeodomain-like_sf"/>
</dbReference>
<dbReference type="InterPro" id="IPR037923">
    <property type="entry name" value="HTH-like"/>
</dbReference>
<dbReference type="InterPro" id="IPR018060">
    <property type="entry name" value="HTH_AraC"/>
</dbReference>
<dbReference type="InterPro" id="IPR018062">
    <property type="entry name" value="HTH_AraC-typ_CS"/>
</dbReference>
<dbReference type="InterPro" id="IPR047220">
    <property type="entry name" value="RhaR_RhaS-like_N"/>
</dbReference>
<dbReference type="InterPro" id="IPR014710">
    <property type="entry name" value="RmlC-like_jellyroll"/>
</dbReference>
<dbReference type="InterPro" id="IPR020449">
    <property type="entry name" value="Tscrpt_reg_AraC-type_HTH"/>
</dbReference>
<dbReference type="InterPro" id="IPR023609">
    <property type="entry name" value="Tscrpt_reg_HTH_RhaS"/>
</dbReference>
<dbReference type="NCBIfam" id="NF010028">
    <property type="entry name" value="PRK13503.1"/>
    <property type="match status" value="1"/>
</dbReference>
<dbReference type="PANTHER" id="PTHR46796:SF13">
    <property type="entry name" value="HTH-TYPE TRANSCRIPTIONAL ACTIVATOR RHAS"/>
    <property type="match status" value="1"/>
</dbReference>
<dbReference type="PANTHER" id="PTHR46796">
    <property type="entry name" value="HTH-TYPE TRANSCRIPTIONAL ACTIVATOR RHAS-RELATED"/>
    <property type="match status" value="1"/>
</dbReference>
<dbReference type="Pfam" id="PF02311">
    <property type="entry name" value="AraC_binding"/>
    <property type="match status" value="1"/>
</dbReference>
<dbReference type="Pfam" id="PF12833">
    <property type="entry name" value="HTH_18"/>
    <property type="match status" value="1"/>
</dbReference>
<dbReference type="PRINTS" id="PR00032">
    <property type="entry name" value="HTHARAC"/>
</dbReference>
<dbReference type="SMART" id="SM00342">
    <property type="entry name" value="HTH_ARAC"/>
    <property type="match status" value="1"/>
</dbReference>
<dbReference type="SUPFAM" id="SSF46689">
    <property type="entry name" value="Homeodomain-like"/>
    <property type="match status" value="2"/>
</dbReference>
<dbReference type="SUPFAM" id="SSF51215">
    <property type="entry name" value="Regulatory protein AraC"/>
    <property type="match status" value="1"/>
</dbReference>
<dbReference type="PROSITE" id="PS00041">
    <property type="entry name" value="HTH_ARAC_FAMILY_1"/>
    <property type="match status" value="1"/>
</dbReference>
<dbReference type="PROSITE" id="PS01124">
    <property type="entry name" value="HTH_ARAC_FAMILY_2"/>
    <property type="match status" value="1"/>
</dbReference>